<sequence length="294" mass="33934">MIEVLTTDSQKLLHQLNTLLEQESRCQPKVCGLKLIESAHDNGLRMTARLRDFEVKDLLSLTQFFGFDTETFSLAVNLLDRFLSKMKVQAKHLGCVGLSCFYLAVKSIEEERNVPLATDLIRISQYRFTVSDLMRMEKIVLEKVCWKVKATTAFQFLQLYYSLIRETLPFERRNDLNFERLEAQLKACHCRIIFSKAKPSVLALAIIALEIQALKYVELTEGVECIQKHSKISGRDLTFWQELVSKCLTEYSSNKCSKPNGQKLKWIVSGRTARQLKHSYYRITHLPTIPETMG</sequence>
<organism>
    <name type="scientific">Rattus norvegicus</name>
    <name type="common">Rat</name>
    <dbReference type="NCBI Taxonomy" id="10116"/>
    <lineage>
        <taxon>Eukaryota</taxon>
        <taxon>Metazoa</taxon>
        <taxon>Chordata</taxon>
        <taxon>Craniata</taxon>
        <taxon>Vertebrata</taxon>
        <taxon>Euteleostomi</taxon>
        <taxon>Mammalia</taxon>
        <taxon>Eutheria</taxon>
        <taxon>Euarchontoglires</taxon>
        <taxon>Glires</taxon>
        <taxon>Rodentia</taxon>
        <taxon>Myomorpha</taxon>
        <taxon>Muroidea</taxon>
        <taxon>Muridae</taxon>
        <taxon>Murinae</taxon>
        <taxon>Rattus</taxon>
    </lineage>
</organism>
<keyword id="KW-0131">Cell cycle</keyword>
<keyword id="KW-0132">Cell division</keyword>
<keyword id="KW-0195">Cyclin</keyword>
<keyword id="KW-0498">Mitosis</keyword>
<keyword id="KW-0539">Nucleus</keyword>
<keyword id="KW-1185">Reference proteome</keyword>
<evidence type="ECO:0000250" key="1"/>
<evidence type="ECO:0000269" key="2">
    <source>
    </source>
</evidence>
<evidence type="ECO:0000305" key="3"/>
<gene>
    <name type="primary">Ccng1</name>
    <name type="synonym">Ccng</name>
</gene>
<reference key="1">
    <citation type="journal article" date="1993" name="Oncogene">
        <title>Cyclin G: a new mammalian cyclin with homology to fission yeast Cig1.</title>
        <authorList>
            <person name="Tamura K."/>
            <person name="Kanaoka Y."/>
            <person name="Jinno S."/>
            <person name="Nagata A."/>
            <person name="Ogiso Y."/>
            <person name="Shimizu K."/>
            <person name="Hayakawa T."/>
            <person name="Nojima H."/>
            <person name="Okayama H."/>
        </authorList>
    </citation>
    <scope>NUCLEOTIDE SEQUENCE [MRNA]</scope>
    <source>
        <tissue>Fibroblast</tissue>
    </source>
</reference>
<reference key="2">
    <citation type="journal article" date="1996" name="Genomics">
        <title>Structure and chromosomal assignment of the human cyclin G gene.</title>
        <authorList>
            <person name="Endo Y."/>
            <person name="Fujita T."/>
            <person name="Tamura K."/>
            <person name="Tsuruga H."/>
            <person name="Nojima H."/>
        </authorList>
    </citation>
    <scope>SEQUENCE REVISION TO N-TERMINUS</scope>
</reference>
<reference key="3">
    <citation type="journal article" date="1995" name="Oncogene">
        <title>Identification of p53 target genes through immune selection of genomic DNA: the cyclin G gene contains two distinct p53 binding sites.</title>
        <authorList>
            <person name="Zauberman A."/>
            <person name="Lupo A."/>
            <person name="Oren M."/>
        </authorList>
    </citation>
    <scope>NUCLEOTIDE SEQUENCE [MRNA]</scope>
    <source>
        <strain>Fischer</strain>
        <tissue>Embryonic fibroblast</tissue>
    </source>
</reference>
<reference key="4">
    <citation type="journal article" date="2004" name="Genome Res.">
        <title>The status, quality, and expansion of the NIH full-length cDNA project: the Mammalian Gene Collection (MGC).</title>
        <authorList>
            <consortium name="The MGC Project Team"/>
        </authorList>
    </citation>
    <scope>NUCLEOTIDE SEQUENCE [LARGE SCALE MRNA]</scope>
    <source>
        <tissue>Heart</tissue>
    </source>
</reference>
<reference key="5">
    <citation type="journal article" date="1998" name="Biochem. Biophys. Res. Commun.">
        <title>CyclinG contributes to G2/M arrest of cells in response to DNA damage.</title>
        <authorList>
            <person name="Shimizu A."/>
            <person name="Nishida J."/>
            <person name="Ueoka Y."/>
            <person name="Kato K."/>
            <person name="Hachiya T."/>
            <person name="Kuriaki Y."/>
            <person name="Wake N."/>
        </authorList>
    </citation>
    <scope>FUNCTION</scope>
</reference>
<dbReference type="EMBL" id="X70871">
    <property type="protein sequence ID" value="CAA50219.1"/>
    <property type="molecule type" value="mRNA"/>
</dbReference>
<dbReference type="EMBL" id="BC081852">
    <property type="protein sequence ID" value="AAH81852.1"/>
    <property type="molecule type" value="mRNA"/>
</dbReference>
<dbReference type="PIR" id="S37693">
    <property type="entry name" value="S37693"/>
</dbReference>
<dbReference type="RefSeq" id="NP_037055.1">
    <property type="nucleotide sequence ID" value="NM_012923.2"/>
</dbReference>
<dbReference type="SMR" id="P39950"/>
<dbReference type="BioGRID" id="247440">
    <property type="interactions" value="2"/>
</dbReference>
<dbReference type="FunCoup" id="P39950">
    <property type="interactions" value="3028"/>
</dbReference>
<dbReference type="STRING" id="10116.ENSRNOP00000073529"/>
<dbReference type="PhosphoSitePlus" id="P39950"/>
<dbReference type="PaxDb" id="10116-ENSRNOP00000063905"/>
<dbReference type="Ensembl" id="ENSRNOT00000065633.4">
    <property type="protein sequence ID" value="ENSRNOP00000063905.1"/>
    <property type="gene ID" value="ENSRNOG00000003256.8"/>
</dbReference>
<dbReference type="GeneID" id="25405"/>
<dbReference type="KEGG" id="rno:25405"/>
<dbReference type="UCSC" id="RGD:2295">
    <property type="organism name" value="rat"/>
</dbReference>
<dbReference type="AGR" id="RGD:2295"/>
<dbReference type="CTD" id="900"/>
<dbReference type="RGD" id="2295">
    <property type="gene designation" value="Ccng1"/>
</dbReference>
<dbReference type="eggNOG" id="KOG0653">
    <property type="taxonomic scope" value="Eukaryota"/>
</dbReference>
<dbReference type="GeneTree" id="ENSGT00940000154726"/>
<dbReference type="HOGENOM" id="CLU_062642_0_0_1"/>
<dbReference type="InParanoid" id="P39950"/>
<dbReference type="OMA" id="CFEAQEE"/>
<dbReference type="OrthoDB" id="769138at2759"/>
<dbReference type="PhylomeDB" id="P39950"/>
<dbReference type="TreeFam" id="TF101007"/>
<dbReference type="Reactome" id="R-RNO-6804757">
    <property type="pathway name" value="Regulation of TP53 Degradation"/>
</dbReference>
<dbReference type="PRO" id="PR:P39950"/>
<dbReference type="Proteomes" id="UP000002494">
    <property type="component" value="Chromosome 10"/>
</dbReference>
<dbReference type="Bgee" id="ENSRNOG00000003256">
    <property type="expression patterns" value="Expressed in quadriceps femoris and 20 other cell types or tissues"/>
</dbReference>
<dbReference type="ExpressionAtlas" id="P39950">
    <property type="expression patterns" value="baseline and differential"/>
</dbReference>
<dbReference type="GO" id="GO:0000307">
    <property type="term" value="C:cyclin-dependent protein kinase holoenzyme complex"/>
    <property type="evidence" value="ECO:0000318"/>
    <property type="project" value="GO_Central"/>
</dbReference>
<dbReference type="GO" id="GO:0005737">
    <property type="term" value="C:cytoplasm"/>
    <property type="evidence" value="ECO:0000318"/>
    <property type="project" value="GO_Central"/>
</dbReference>
<dbReference type="GO" id="GO:0030425">
    <property type="term" value="C:dendrite"/>
    <property type="evidence" value="ECO:0000314"/>
    <property type="project" value="RGD"/>
</dbReference>
<dbReference type="GO" id="GO:0043025">
    <property type="term" value="C:neuronal cell body"/>
    <property type="evidence" value="ECO:0000314"/>
    <property type="project" value="RGD"/>
</dbReference>
<dbReference type="GO" id="GO:0005634">
    <property type="term" value="C:nucleus"/>
    <property type="evidence" value="ECO:0000318"/>
    <property type="project" value="GO_Central"/>
</dbReference>
<dbReference type="GO" id="GO:0048471">
    <property type="term" value="C:perinuclear region of cytoplasm"/>
    <property type="evidence" value="ECO:0000314"/>
    <property type="project" value="RGD"/>
</dbReference>
<dbReference type="GO" id="GO:0016538">
    <property type="term" value="F:cyclin-dependent protein serine/threonine kinase regulator activity"/>
    <property type="evidence" value="ECO:0000318"/>
    <property type="project" value="GO_Central"/>
</dbReference>
<dbReference type="GO" id="GO:0051301">
    <property type="term" value="P:cell division"/>
    <property type="evidence" value="ECO:0007669"/>
    <property type="project" value="UniProtKB-KW"/>
</dbReference>
<dbReference type="GO" id="GO:0000082">
    <property type="term" value="P:G1/S transition of mitotic cell cycle"/>
    <property type="evidence" value="ECO:0000318"/>
    <property type="project" value="GO_Central"/>
</dbReference>
<dbReference type="GO" id="GO:0007095">
    <property type="term" value="P:mitotic G2 DNA damage checkpoint signaling"/>
    <property type="evidence" value="ECO:0000315"/>
    <property type="project" value="RGD"/>
</dbReference>
<dbReference type="GO" id="GO:0043066">
    <property type="term" value="P:negative regulation of apoptotic process"/>
    <property type="evidence" value="ECO:0000315"/>
    <property type="project" value="RGD"/>
</dbReference>
<dbReference type="GO" id="GO:0009629">
    <property type="term" value="P:response to gravity"/>
    <property type="evidence" value="ECO:0000270"/>
    <property type="project" value="RGD"/>
</dbReference>
<dbReference type="GO" id="GO:0006949">
    <property type="term" value="P:syncytium formation"/>
    <property type="evidence" value="ECO:0000315"/>
    <property type="project" value="RGD"/>
</dbReference>
<dbReference type="CDD" id="cd20583">
    <property type="entry name" value="CYCLIN_CCNG1"/>
    <property type="match status" value="1"/>
</dbReference>
<dbReference type="FunFam" id="1.10.472.10:FF:000006">
    <property type="entry name" value="Cyclin I"/>
    <property type="match status" value="1"/>
</dbReference>
<dbReference type="Gene3D" id="1.10.472.10">
    <property type="entry name" value="Cyclin-like"/>
    <property type="match status" value="2"/>
</dbReference>
<dbReference type="InterPro" id="IPR039361">
    <property type="entry name" value="Cyclin"/>
</dbReference>
<dbReference type="InterPro" id="IPR013763">
    <property type="entry name" value="Cyclin-like_dom"/>
</dbReference>
<dbReference type="InterPro" id="IPR036915">
    <property type="entry name" value="Cyclin-like_sf"/>
</dbReference>
<dbReference type="InterPro" id="IPR006671">
    <property type="entry name" value="Cyclin_N"/>
</dbReference>
<dbReference type="PANTHER" id="PTHR10177">
    <property type="entry name" value="CYCLINS"/>
    <property type="match status" value="1"/>
</dbReference>
<dbReference type="Pfam" id="PF00134">
    <property type="entry name" value="Cyclin_N"/>
    <property type="match status" value="1"/>
</dbReference>
<dbReference type="SMART" id="SM00385">
    <property type="entry name" value="CYCLIN"/>
    <property type="match status" value="1"/>
</dbReference>
<dbReference type="SUPFAM" id="SSF47954">
    <property type="entry name" value="Cyclin-like"/>
    <property type="match status" value="1"/>
</dbReference>
<name>CCNG1_RAT</name>
<proteinExistence type="evidence at transcript level"/>
<feature type="chain" id="PRO_0000080468" description="Cyclin-G1">
    <location>
        <begin position="1"/>
        <end position="294"/>
    </location>
</feature>
<protein>
    <recommendedName>
        <fullName>Cyclin-G1</fullName>
        <shortName>Cyclin-G</shortName>
    </recommendedName>
</protein>
<comment type="function">
    <text evidence="2">May play a role in growth regulation. Is associated with G2/M phase arrest in response to DNA damage. May be an intermediate by which p53 mediates its role as an inhibitor of cellular proliferation.</text>
</comment>
<comment type="subcellular location">
    <subcellularLocation>
        <location evidence="1">Nucleus</location>
    </subcellularLocation>
</comment>
<comment type="developmental stage">
    <text>Induced within 3 hours after growth stimulation, remains elevated with no apparent cell cycle dependency.</text>
</comment>
<comment type="induction">
    <text>By doxorubicin (DOX).</text>
</comment>
<comment type="similarity">
    <text evidence="3">Belongs to the cyclin family. Cyclin G subfamily.</text>
</comment>
<accession>P39950</accession>